<keyword id="KW-0240">DNA-directed RNA polymerase</keyword>
<keyword id="KW-0460">Magnesium</keyword>
<keyword id="KW-0479">Metal-binding</keyword>
<keyword id="KW-0548">Nucleotidyltransferase</keyword>
<keyword id="KW-0804">Transcription</keyword>
<keyword id="KW-0808">Transferase</keyword>
<keyword id="KW-0862">Zinc</keyword>
<comment type="function">
    <text evidence="1">DNA-dependent RNA polymerase catalyzes the transcription of DNA into RNA using the four ribonucleoside triphosphates as substrates.</text>
</comment>
<comment type="catalytic activity">
    <reaction evidence="1">
        <text>RNA(n) + a ribonucleoside 5'-triphosphate = RNA(n+1) + diphosphate</text>
        <dbReference type="Rhea" id="RHEA:21248"/>
        <dbReference type="Rhea" id="RHEA-COMP:14527"/>
        <dbReference type="Rhea" id="RHEA-COMP:17342"/>
        <dbReference type="ChEBI" id="CHEBI:33019"/>
        <dbReference type="ChEBI" id="CHEBI:61557"/>
        <dbReference type="ChEBI" id="CHEBI:140395"/>
        <dbReference type="EC" id="2.7.7.6"/>
    </reaction>
</comment>
<comment type="cofactor">
    <cofactor evidence="1">
        <name>Mg(2+)</name>
        <dbReference type="ChEBI" id="CHEBI:18420"/>
    </cofactor>
    <text evidence="1">Binds 1 Mg(2+) ion per subunit.</text>
</comment>
<comment type="cofactor">
    <cofactor evidence="1">
        <name>Zn(2+)</name>
        <dbReference type="ChEBI" id="CHEBI:29105"/>
    </cofactor>
    <text evidence="1">Binds 2 Zn(2+) ions per subunit.</text>
</comment>
<comment type="subunit">
    <text evidence="1">The RNAP catalytic core consists of 2 alpha, 1 beta, 1 beta' and 1 omega subunit. When a sigma factor is associated with the core the holoenzyme is formed, which can initiate transcription.</text>
</comment>
<comment type="similarity">
    <text evidence="1">Belongs to the RNA polymerase beta' chain family.</text>
</comment>
<evidence type="ECO:0000255" key="1">
    <source>
        <dbReference type="HAMAP-Rule" id="MF_01322"/>
    </source>
</evidence>
<sequence>MNQEVMNLFNPQAPAQTFDSIRISIASPEKILSWSYGEIKKPETINYRTFKPERDGLFCARIFGPIKDYECLCGKYKRMKYKGIICEKCGVEVTLSRVRRERMGHIELAAPVAHIWFLKSLPSRIGTLLDMTLKDIERILYFENYIVTEPGLTSLKEHQLLSEEEYMIAVDEFGEDQFTALIGAEAIYELLASMELEKIAADLRVDLAETTSDLKQKKLMKRLKIVENFLESGNRPEWMIMKIVPVIPPDLRPLVPLDGGRFATSDLNDLYRRVINRNNRLKRLIELRAPGIIIRNEKRMLQEAVDALFDNGRRGRVITGANKRPLKSLSDMLKGKQGRFRQNLLGKRVDYSGRSVIVTGPELKLHQCGLPKKMALELFKPFIYARLDAKGYSSTVKQAKKLVEKERPEVWDILDEVIREHPVLLNRAPTLHRLGIQAFEPTLIEGKAIQLHPLVCTAFNADFDGDQMAVHVPLSLEAQLEARVLMMSTNNILHPANGAPIIVPSQDMVLGLYYLSIVAEKEPGEGMIFADMGELQHALENKVVTLHTKIKGRFKTVDAEGNPVLKIYDTTPGRMIMGELLPKNVNVPFDICNQEMTKKNISKMIDHVYRHCGQKETVIFCDRIMQLGFAHACRAGISFGKDDMVIPESKAKIVAETEALTTEYEQQYNDGLITQGEKYNKVVDAWGKATDKITEEMMARLKAVEFDPVTGRQKQMNSVYMMSHSGARGSVNQMRQLGGMRGLMAKPSGEIIETPIISNFKEGLTVNEYFNSTHGARKGLADTALKTANSGYLTRRLVDVAQDAIISEVDCGAEIGLTMQPIVDAGQIVASIGQRVLGRTALDPILHPVTGEVIVEAGRMIEEKDVEIIEKAGIQSIRIRSALTCETRNGVCAKCYGRDLARGTPVNQGEAVGVIAAQSIGEPGTQLTMRTFHLGGTAQVVDSSYLEASYEGTVKLRNRNVVRNSDGNLVVMGRNMAVLILDATGKERAVHRVTYGSRLFVDEGDTVKRGQRIAEWDPYTRPIMTEVEGYVEFEDLVDGLSVSETADESTGITKRVVIDWRSTPRGSDLKPAMVIKDKAGKILKLSKGGDARFLLSVESILSVEPGAHVKAGDVIARLPMESAKTKDITGGLPRVAELFEARRPKDHAIIAEIDGTVRFGRDYKNKRRIIIEPNDDTIEPVEYLIPKGKPFHLQDGDVIEKGEYILDGNPAPHDILAIKGVEALASYLVNEIQEVYRLQGVLINDKHIEVIVRQMLQKVEITESGDTGYIPGDHVDRIELEEINERLIEEGKKPGSGNPVLLGITKASLQTPSFISAASFQETTRVLTEAAVAGKMDTLQGLKENVIVGRLIPAGTGGMTNQIRRIATARDELIIDERRKTSGSAEANAMLVDMTNNAAE</sequence>
<protein>
    <recommendedName>
        <fullName evidence="1">DNA-directed RNA polymerase subunit beta'</fullName>
        <shortName evidence="1">RNAP subunit beta'</shortName>
        <ecNumber evidence="1">2.7.7.6</ecNumber>
    </recommendedName>
    <alternativeName>
        <fullName evidence="1">RNA polymerase subunit beta'</fullName>
    </alternativeName>
    <alternativeName>
        <fullName evidence="1">Transcriptase subunit beta'</fullName>
    </alternativeName>
</protein>
<feature type="chain" id="PRO_0000225516" description="DNA-directed RNA polymerase subunit beta'">
    <location>
        <begin position="1"/>
        <end position="1400"/>
    </location>
</feature>
<feature type="binding site" evidence="1">
    <location>
        <position position="71"/>
    </location>
    <ligand>
        <name>Zn(2+)</name>
        <dbReference type="ChEBI" id="CHEBI:29105"/>
        <label>1</label>
    </ligand>
</feature>
<feature type="binding site" evidence="1">
    <location>
        <position position="73"/>
    </location>
    <ligand>
        <name>Zn(2+)</name>
        <dbReference type="ChEBI" id="CHEBI:29105"/>
        <label>1</label>
    </ligand>
</feature>
<feature type="binding site" evidence="1">
    <location>
        <position position="86"/>
    </location>
    <ligand>
        <name>Zn(2+)</name>
        <dbReference type="ChEBI" id="CHEBI:29105"/>
        <label>1</label>
    </ligand>
</feature>
<feature type="binding site" evidence="1">
    <location>
        <position position="89"/>
    </location>
    <ligand>
        <name>Zn(2+)</name>
        <dbReference type="ChEBI" id="CHEBI:29105"/>
        <label>1</label>
    </ligand>
</feature>
<feature type="binding site" evidence="1">
    <location>
        <position position="462"/>
    </location>
    <ligand>
        <name>Mg(2+)</name>
        <dbReference type="ChEBI" id="CHEBI:18420"/>
    </ligand>
</feature>
<feature type="binding site" evidence="1">
    <location>
        <position position="464"/>
    </location>
    <ligand>
        <name>Mg(2+)</name>
        <dbReference type="ChEBI" id="CHEBI:18420"/>
    </ligand>
</feature>
<feature type="binding site" evidence="1">
    <location>
        <position position="466"/>
    </location>
    <ligand>
        <name>Mg(2+)</name>
        <dbReference type="ChEBI" id="CHEBI:18420"/>
    </ligand>
</feature>
<feature type="binding site" evidence="1">
    <location>
        <position position="811"/>
    </location>
    <ligand>
        <name>Zn(2+)</name>
        <dbReference type="ChEBI" id="CHEBI:29105"/>
        <label>2</label>
    </ligand>
</feature>
<feature type="binding site" evidence="1">
    <location>
        <position position="885"/>
    </location>
    <ligand>
        <name>Zn(2+)</name>
        <dbReference type="ChEBI" id="CHEBI:29105"/>
        <label>2</label>
    </ligand>
</feature>
<feature type="binding site" evidence="1">
    <location>
        <position position="892"/>
    </location>
    <ligand>
        <name>Zn(2+)</name>
        <dbReference type="ChEBI" id="CHEBI:29105"/>
        <label>2</label>
    </ligand>
</feature>
<feature type="binding site" evidence="1">
    <location>
        <position position="895"/>
    </location>
    <ligand>
        <name>Zn(2+)</name>
        <dbReference type="ChEBI" id="CHEBI:29105"/>
        <label>2</label>
    </ligand>
</feature>
<accession>Q57CP9</accession>
<reference key="1">
    <citation type="journal article" date="2005" name="J. Bacteriol.">
        <title>Completion of the genome sequence of Brucella abortus and comparison to the highly similar genomes of Brucella melitensis and Brucella suis.</title>
        <authorList>
            <person name="Halling S.M."/>
            <person name="Peterson-Burch B.D."/>
            <person name="Bricker B.J."/>
            <person name="Zuerner R.L."/>
            <person name="Qing Z."/>
            <person name="Li L.-L."/>
            <person name="Kapur V."/>
            <person name="Alt D.P."/>
            <person name="Olsen S.C."/>
        </authorList>
    </citation>
    <scope>NUCLEOTIDE SEQUENCE [LARGE SCALE GENOMIC DNA]</scope>
    <source>
        <strain>9-941</strain>
    </source>
</reference>
<name>RPOC_BRUAB</name>
<proteinExistence type="inferred from homology"/>
<dbReference type="EC" id="2.7.7.6" evidence="1"/>
<dbReference type="EMBL" id="AE017223">
    <property type="protein sequence ID" value="AAX74585.1"/>
    <property type="molecule type" value="Genomic_DNA"/>
</dbReference>
<dbReference type="RefSeq" id="WP_002964369.1">
    <property type="nucleotide sequence ID" value="NC_006932.1"/>
</dbReference>
<dbReference type="SMR" id="Q57CP9"/>
<dbReference type="EnsemblBacteria" id="AAX74585">
    <property type="protein sequence ID" value="AAX74585"/>
    <property type="gene ID" value="BruAb1_1247"/>
</dbReference>
<dbReference type="GeneID" id="93016433"/>
<dbReference type="KEGG" id="bmb:BruAb1_1247"/>
<dbReference type="HOGENOM" id="CLU_000524_3_1_5"/>
<dbReference type="Proteomes" id="UP000000540">
    <property type="component" value="Chromosome I"/>
</dbReference>
<dbReference type="GO" id="GO:0000428">
    <property type="term" value="C:DNA-directed RNA polymerase complex"/>
    <property type="evidence" value="ECO:0007669"/>
    <property type="project" value="UniProtKB-KW"/>
</dbReference>
<dbReference type="GO" id="GO:0003677">
    <property type="term" value="F:DNA binding"/>
    <property type="evidence" value="ECO:0007669"/>
    <property type="project" value="UniProtKB-UniRule"/>
</dbReference>
<dbReference type="GO" id="GO:0003899">
    <property type="term" value="F:DNA-directed RNA polymerase activity"/>
    <property type="evidence" value="ECO:0007669"/>
    <property type="project" value="UniProtKB-UniRule"/>
</dbReference>
<dbReference type="GO" id="GO:0000287">
    <property type="term" value="F:magnesium ion binding"/>
    <property type="evidence" value="ECO:0007669"/>
    <property type="project" value="UniProtKB-UniRule"/>
</dbReference>
<dbReference type="GO" id="GO:0008270">
    <property type="term" value="F:zinc ion binding"/>
    <property type="evidence" value="ECO:0007669"/>
    <property type="project" value="UniProtKB-UniRule"/>
</dbReference>
<dbReference type="GO" id="GO:0006351">
    <property type="term" value="P:DNA-templated transcription"/>
    <property type="evidence" value="ECO:0007669"/>
    <property type="project" value="UniProtKB-UniRule"/>
</dbReference>
<dbReference type="CDD" id="cd02655">
    <property type="entry name" value="RNAP_beta'_C"/>
    <property type="match status" value="1"/>
</dbReference>
<dbReference type="CDD" id="cd01609">
    <property type="entry name" value="RNAP_beta'_N"/>
    <property type="match status" value="1"/>
</dbReference>
<dbReference type="FunFam" id="4.10.860.120:FF:000001">
    <property type="entry name" value="DNA-directed RNA polymerase subunit beta"/>
    <property type="match status" value="1"/>
</dbReference>
<dbReference type="Gene3D" id="1.10.132.30">
    <property type="match status" value="1"/>
</dbReference>
<dbReference type="Gene3D" id="1.10.150.390">
    <property type="match status" value="1"/>
</dbReference>
<dbReference type="Gene3D" id="1.10.1790.20">
    <property type="match status" value="1"/>
</dbReference>
<dbReference type="Gene3D" id="1.10.40.90">
    <property type="match status" value="1"/>
</dbReference>
<dbReference type="Gene3D" id="2.40.40.20">
    <property type="match status" value="1"/>
</dbReference>
<dbReference type="Gene3D" id="2.40.50.100">
    <property type="match status" value="3"/>
</dbReference>
<dbReference type="Gene3D" id="4.10.860.120">
    <property type="entry name" value="RNA polymerase II, clamp domain"/>
    <property type="match status" value="1"/>
</dbReference>
<dbReference type="Gene3D" id="1.10.274.100">
    <property type="entry name" value="RNA polymerase Rpb1, domain 3"/>
    <property type="match status" value="2"/>
</dbReference>
<dbReference type="HAMAP" id="MF_01322">
    <property type="entry name" value="RNApol_bact_RpoC"/>
    <property type="match status" value="1"/>
</dbReference>
<dbReference type="InterPro" id="IPR045867">
    <property type="entry name" value="DNA-dir_RpoC_beta_prime"/>
</dbReference>
<dbReference type="InterPro" id="IPR012754">
    <property type="entry name" value="DNA-dir_RpoC_beta_prime_bact"/>
</dbReference>
<dbReference type="InterPro" id="IPR000722">
    <property type="entry name" value="RNA_pol_asu"/>
</dbReference>
<dbReference type="InterPro" id="IPR006592">
    <property type="entry name" value="RNA_pol_N"/>
</dbReference>
<dbReference type="InterPro" id="IPR007080">
    <property type="entry name" value="RNA_pol_Rpb1_1"/>
</dbReference>
<dbReference type="InterPro" id="IPR007066">
    <property type="entry name" value="RNA_pol_Rpb1_3"/>
</dbReference>
<dbReference type="InterPro" id="IPR042102">
    <property type="entry name" value="RNA_pol_Rpb1_3_sf"/>
</dbReference>
<dbReference type="InterPro" id="IPR007083">
    <property type="entry name" value="RNA_pol_Rpb1_4"/>
</dbReference>
<dbReference type="InterPro" id="IPR007081">
    <property type="entry name" value="RNA_pol_Rpb1_5"/>
</dbReference>
<dbReference type="InterPro" id="IPR044893">
    <property type="entry name" value="RNA_pol_Rpb1_clamp_domain"/>
</dbReference>
<dbReference type="InterPro" id="IPR038120">
    <property type="entry name" value="Rpb1_funnel_sf"/>
</dbReference>
<dbReference type="NCBIfam" id="TIGR02386">
    <property type="entry name" value="rpoC_TIGR"/>
    <property type="match status" value="1"/>
</dbReference>
<dbReference type="PANTHER" id="PTHR19376">
    <property type="entry name" value="DNA-DIRECTED RNA POLYMERASE"/>
    <property type="match status" value="1"/>
</dbReference>
<dbReference type="PANTHER" id="PTHR19376:SF54">
    <property type="entry name" value="DNA-DIRECTED RNA POLYMERASE SUBUNIT BETA"/>
    <property type="match status" value="1"/>
</dbReference>
<dbReference type="Pfam" id="PF04997">
    <property type="entry name" value="RNA_pol_Rpb1_1"/>
    <property type="match status" value="1"/>
</dbReference>
<dbReference type="Pfam" id="PF00623">
    <property type="entry name" value="RNA_pol_Rpb1_2"/>
    <property type="match status" value="1"/>
</dbReference>
<dbReference type="Pfam" id="PF04983">
    <property type="entry name" value="RNA_pol_Rpb1_3"/>
    <property type="match status" value="1"/>
</dbReference>
<dbReference type="Pfam" id="PF05000">
    <property type="entry name" value="RNA_pol_Rpb1_4"/>
    <property type="match status" value="1"/>
</dbReference>
<dbReference type="Pfam" id="PF04998">
    <property type="entry name" value="RNA_pol_Rpb1_5"/>
    <property type="match status" value="1"/>
</dbReference>
<dbReference type="SMART" id="SM00663">
    <property type="entry name" value="RPOLA_N"/>
    <property type="match status" value="1"/>
</dbReference>
<dbReference type="SUPFAM" id="SSF64484">
    <property type="entry name" value="beta and beta-prime subunits of DNA dependent RNA-polymerase"/>
    <property type="match status" value="1"/>
</dbReference>
<gene>
    <name evidence="1" type="primary">rpoC</name>
    <name type="ordered locus">BruAb1_1247</name>
</gene>
<organism>
    <name type="scientific">Brucella abortus biovar 1 (strain 9-941)</name>
    <dbReference type="NCBI Taxonomy" id="262698"/>
    <lineage>
        <taxon>Bacteria</taxon>
        <taxon>Pseudomonadati</taxon>
        <taxon>Pseudomonadota</taxon>
        <taxon>Alphaproteobacteria</taxon>
        <taxon>Hyphomicrobiales</taxon>
        <taxon>Brucellaceae</taxon>
        <taxon>Brucella/Ochrobactrum group</taxon>
        <taxon>Brucella</taxon>
    </lineage>
</organism>